<evidence type="ECO:0000269" key="1">
    <source>
    </source>
</evidence>
<evidence type="ECO:0000303" key="2">
    <source>
    </source>
</evidence>
<evidence type="ECO:0000305" key="3"/>
<evidence type="ECO:0000305" key="4">
    <source>
    </source>
</evidence>
<evidence type="ECO:0000312" key="5">
    <source>
        <dbReference type="EMBL" id="AJR27114.1"/>
    </source>
</evidence>
<evidence type="ECO:0000312" key="6">
    <source>
        <dbReference type="Proteomes" id="UP000032302"/>
    </source>
</evidence>
<organism>
    <name type="scientific">Sphingobium sp. (strain YBL2)</name>
    <dbReference type="NCBI Taxonomy" id="484429"/>
    <lineage>
        <taxon>Bacteria</taxon>
        <taxon>Pseudomonadati</taxon>
        <taxon>Pseudomonadota</taxon>
        <taxon>Alphaproteobacteria</taxon>
        <taxon>Sphingomonadales</taxon>
        <taxon>Sphingomonadaceae</taxon>
        <taxon>Sphingobium</taxon>
    </lineage>
</organism>
<keyword id="KW-0560">Oxidoreductase</keyword>
<keyword id="KW-0614">Plasmid</keyword>
<feature type="chain" id="PRO_0000459012" description="N,N-dimethyl phenylurea N-demethylase subunit beta">
    <location>
        <begin position="1"/>
        <end position="176"/>
    </location>
</feature>
<protein>
    <recommendedName>
        <fullName evidence="3">N,N-dimethyl phenylurea N-demethylase subunit beta</fullName>
        <ecNumber evidence="1">1.14.15.38</ecNumber>
    </recommendedName>
</protein>
<proteinExistence type="evidence at protein level"/>
<sequence>MTVDALSNADNQDLRDNFIANRFLSHEAKLLDQRRFTEWLDLLDDEIRYIVPLRLMALDFDREVRADSFHINDGKVNLKVRAKRSSVSSGWGETPPSRTLRLVGSVMTDRIDQEGVLEVESAVIIYRQRAAIGQGDVLAFRRTDWLRIDGGTVKLLKRVALLTDASLATPNLAIFL</sequence>
<geneLocation type="plasmid" evidence="6">
    <name>YBL2_4</name>
</geneLocation>
<accession>S5SC42</accession>
<accession>A0A0C5XCJ6</accession>
<reference key="1">
    <citation type="journal article" date="2013" name="Appl. Environ. Microbiol.">
        <title>The novel bacterial N-demethylase PdmAB is responsible for the initial step of N,N-dimethyl-substituted phenylurea herbicide degradation.</title>
        <authorList>
            <person name="Gu T."/>
            <person name="Zhou C."/>
            <person name="Soerensen S.R."/>
            <person name="Zhang J."/>
            <person name="He J."/>
            <person name="Yu P."/>
            <person name="Yan X."/>
            <person name="Li S."/>
        </authorList>
    </citation>
    <scope>NUCLEOTIDE SEQUENCE [GENOMIC DNA]</scope>
    <scope>FUNCTION</scope>
    <scope>CATALYTIC ACTIVITY</scope>
    <scope>ACTIVITY REGULATION</scope>
    <scope>SUBUNIT</scope>
    <source>
        <strain>YBL2</strain>
    </source>
</reference>
<reference key="2">
    <citation type="submission" date="2015-02" db="EMBL/GenBank/DDBJ databases">
        <title>The analysis of one genome.</title>
        <authorList>
            <person name="Yan X."/>
        </authorList>
    </citation>
    <scope>NUCLEOTIDE SEQUENCE [LARGE SCALE GENOMIC DNA]</scope>
    <source>
        <strain>YBL2</strain>
        <plasmid>YBL2_4</plasmid>
    </source>
</reference>
<dbReference type="EC" id="1.14.15.38" evidence="1"/>
<dbReference type="EMBL" id="KC904972">
    <property type="protein sequence ID" value="AGS18336.1"/>
    <property type="molecule type" value="Genomic_DNA"/>
</dbReference>
<dbReference type="EMBL" id="CP010958">
    <property type="protein sequence ID" value="AJR27114.1"/>
    <property type="molecule type" value="Genomic_DNA"/>
</dbReference>
<dbReference type="RefSeq" id="WP_044663627.1">
    <property type="nucleotide sequence ID" value="NZ_CP010958.1"/>
</dbReference>
<dbReference type="SMR" id="S5SC42"/>
<dbReference type="KEGG" id="syb:TZ53_25070"/>
<dbReference type="PATRIC" id="fig|484429.4.peg.5271"/>
<dbReference type="HOGENOM" id="CLU_102527_1_1_5"/>
<dbReference type="BioCyc" id="MetaCyc:MONOMER-21167"/>
<dbReference type="BRENDA" id="1.14.15.38">
    <property type="organism ID" value="17530"/>
</dbReference>
<dbReference type="Proteomes" id="UP000032302">
    <property type="component" value="Plasmid YBL2_4"/>
</dbReference>
<dbReference type="GO" id="GO:0016491">
    <property type="term" value="F:oxidoreductase activity"/>
    <property type="evidence" value="ECO:0007669"/>
    <property type="project" value="UniProtKB-KW"/>
</dbReference>
<dbReference type="GO" id="GO:0019380">
    <property type="term" value="P:3-phenylpropionate catabolic process"/>
    <property type="evidence" value="ECO:0007669"/>
    <property type="project" value="TreeGrafter"/>
</dbReference>
<dbReference type="Gene3D" id="3.10.450.50">
    <property type="match status" value="1"/>
</dbReference>
<dbReference type="InterPro" id="IPR032710">
    <property type="entry name" value="NTF2-like_dom_sf"/>
</dbReference>
<dbReference type="InterPro" id="IPR000391">
    <property type="entry name" value="Rng_hydr_dOase-bsu"/>
</dbReference>
<dbReference type="PANTHER" id="PTHR41534:SF2">
    <property type="entry name" value="3-PHENYLPROPIONATE_CINNAMIC ACID DIOXYGENASE SUBUNIT BETA"/>
    <property type="match status" value="1"/>
</dbReference>
<dbReference type="PANTHER" id="PTHR41534">
    <property type="entry name" value="BLR3401 PROTEIN"/>
    <property type="match status" value="1"/>
</dbReference>
<dbReference type="Pfam" id="PF00866">
    <property type="entry name" value="Ring_hydroxyl_B"/>
    <property type="match status" value="1"/>
</dbReference>
<dbReference type="SUPFAM" id="SSF54427">
    <property type="entry name" value="NTF2-like"/>
    <property type="match status" value="1"/>
</dbReference>
<comment type="function">
    <text evidence="1">Part of the multicomponent N,N-dimethyl phenylurea N-demethylase responsible for the initial N-demethylation step during the bacterial metabolism of N,N-dimethyl-substituted phenylurea herbicides (PubMed:24123738). Catalyzes the mono-N-demethylation of N,N-dimethyl-substituted phenylurea herbicides to their mono-N-demethylated derivatives (PubMed:24123738). Is active on isoproturon (IPU), chlorotoluron, metoxuron, monoron, diuron, fluometuron and fenuron, but cannot transform the N-methoxy-N-methyl-substituted herbicides (PubMed:24123738).</text>
</comment>
<comment type="catalytic activity">
    <reaction evidence="1">
        <text>a 1,1-dimethyl-3-phenylurea + 2 reduced [2Fe-2S]-[ferredoxin] + O2 + 2 H(+) = a 1-methyl-3-phenylurea + formaldehyde + 2 oxidized [2Fe-2S]-[ferredoxin] + H2O</text>
        <dbReference type="Rhea" id="RHEA:65768"/>
        <dbReference type="Rhea" id="RHEA-COMP:10000"/>
        <dbReference type="Rhea" id="RHEA-COMP:10001"/>
        <dbReference type="ChEBI" id="CHEBI:15377"/>
        <dbReference type="ChEBI" id="CHEBI:15378"/>
        <dbReference type="ChEBI" id="CHEBI:15379"/>
        <dbReference type="ChEBI" id="CHEBI:16842"/>
        <dbReference type="ChEBI" id="CHEBI:33737"/>
        <dbReference type="ChEBI" id="CHEBI:33738"/>
        <dbReference type="ChEBI" id="CHEBI:157693"/>
        <dbReference type="ChEBI" id="CHEBI:157694"/>
        <dbReference type="EC" id="1.14.15.38"/>
    </reaction>
    <physiologicalReaction direction="left-to-right" evidence="1">
        <dbReference type="Rhea" id="RHEA:65769"/>
    </physiologicalReaction>
</comment>
<comment type="catalytic activity">
    <reaction evidence="1">
        <text>isoproturon + 2 reduced [2Fe-2S]-[ferredoxin] + O2 + 2 H(+) = 1-methyl-3-[4-(propan-2-yl)phenyl]urea + formaldehyde + 2 oxidized [2Fe-2S]-[ferredoxin] + H2O</text>
        <dbReference type="Rhea" id="RHEA:65772"/>
        <dbReference type="Rhea" id="RHEA-COMP:10000"/>
        <dbReference type="Rhea" id="RHEA-COMP:10001"/>
        <dbReference type="ChEBI" id="CHEBI:6049"/>
        <dbReference type="ChEBI" id="CHEBI:15377"/>
        <dbReference type="ChEBI" id="CHEBI:15378"/>
        <dbReference type="ChEBI" id="CHEBI:15379"/>
        <dbReference type="ChEBI" id="CHEBI:16842"/>
        <dbReference type="ChEBI" id="CHEBI:33737"/>
        <dbReference type="ChEBI" id="CHEBI:33738"/>
        <dbReference type="ChEBI" id="CHEBI:83468"/>
    </reaction>
    <physiologicalReaction direction="left-to-right" evidence="1">
        <dbReference type="Rhea" id="RHEA:65773"/>
    </physiologicalReaction>
</comment>
<comment type="catalytic activity">
    <reaction evidence="1">
        <text>chlorotoluron + 2 reduced [2Fe-2S]-[ferredoxin] + O2 + 2 H(+) = 3-(3-chloro-4-methylphenyl)-1-methylurea + formaldehyde + 2 oxidized [2Fe-2S]-[ferredoxin] + H2O</text>
        <dbReference type="Rhea" id="RHEA:65776"/>
        <dbReference type="Rhea" id="RHEA-COMP:10000"/>
        <dbReference type="Rhea" id="RHEA-COMP:10001"/>
        <dbReference type="ChEBI" id="CHEBI:15377"/>
        <dbReference type="ChEBI" id="CHEBI:15378"/>
        <dbReference type="ChEBI" id="CHEBI:15379"/>
        <dbReference type="ChEBI" id="CHEBI:16842"/>
        <dbReference type="ChEBI" id="CHEBI:33737"/>
        <dbReference type="ChEBI" id="CHEBI:33738"/>
        <dbReference type="ChEBI" id="CHEBI:81981"/>
        <dbReference type="ChEBI" id="CHEBI:157701"/>
    </reaction>
    <physiologicalReaction direction="left-to-right" evidence="1">
        <dbReference type="Rhea" id="RHEA:65777"/>
    </physiologicalReaction>
</comment>
<comment type="catalytic activity">
    <reaction evidence="1">
        <text>metoxuron + 2 reduced [2Fe-2S]-[ferredoxin] + O2 + 2 H(+) = 3-(3-chloro-4-methoxylphenyl)-1-methylurea + formaldehyde + 2 oxidized [2Fe-2S]-[ferredoxin] + H2O</text>
        <dbReference type="Rhea" id="RHEA:65780"/>
        <dbReference type="Rhea" id="RHEA-COMP:10000"/>
        <dbReference type="Rhea" id="RHEA-COMP:10001"/>
        <dbReference type="ChEBI" id="CHEBI:6907"/>
        <dbReference type="ChEBI" id="CHEBI:15377"/>
        <dbReference type="ChEBI" id="CHEBI:15378"/>
        <dbReference type="ChEBI" id="CHEBI:15379"/>
        <dbReference type="ChEBI" id="CHEBI:16842"/>
        <dbReference type="ChEBI" id="CHEBI:33737"/>
        <dbReference type="ChEBI" id="CHEBI:33738"/>
        <dbReference type="ChEBI" id="CHEBI:157702"/>
    </reaction>
    <physiologicalReaction direction="left-to-right" evidence="1">
        <dbReference type="Rhea" id="RHEA:65781"/>
    </physiologicalReaction>
</comment>
<comment type="catalytic activity">
    <reaction evidence="1">
        <text>monuron + 2 reduced [2Fe-2S]-[ferredoxin] + O2 + 2 H(+) = 3-(4-chlorophenyl)-1-methylurea + formaldehyde + 2 oxidized [2Fe-2S]-[ferredoxin] + H2O</text>
        <dbReference type="Rhea" id="RHEA:65784"/>
        <dbReference type="Rhea" id="RHEA-COMP:10000"/>
        <dbReference type="Rhea" id="RHEA-COMP:10001"/>
        <dbReference type="ChEBI" id="CHEBI:15377"/>
        <dbReference type="ChEBI" id="CHEBI:15378"/>
        <dbReference type="ChEBI" id="CHEBI:15379"/>
        <dbReference type="ChEBI" id="CHEBI:16842"/>
        <dbReference type="ChEBI" id="CHEBI:33737"/>
        <dbReference type="ChEBI" id="CHEBI:33738"/>
        <dbReference type="ChEBI" id="CHEBI:38214"/>
        <dbReference type="ChEBI" id="CHEBI:157703"/>
    </reaction>
    <physiologicalReaction direction="left-to-right" evidence="1">
        <dbReference type="Rhea" id="RHEA:65785"/>
    </physiologicalReaction>
</comment>
<comment type="catalytic activity">
    <reaction evidence="1">
        <text>diuron + 2 reduced [2Fe-2S]-[ferredoxin] + O2 + 2 H(+) = 3-(3,4-dichlorophenyl)-1-methylurea + formaldehyde + 2 oxidized [2Fe-2S]-[ferredoxin] + H2O</text>
        <dbReference type="Rhea" id="RHEA:65788"/>
        <dbReference type="Rhea" id="RHEA-COMP:10000"/>
        <dbReference type="Rhea" id="RHEA-COMP:10001"/>
        <dbReference type="ChEBI" id="CHEBI:15377"/>
        <dbReference type="ChEBI" id="CHEBI:15378"/>
        <dbReference type="ChEBI" id="CHEBI:15379"/>
        <dbReference type="ChEBI" id="CHEBI:16842"/>
        <dbReference type="ChEBI" id="CHEBI:33737"/>
        <dbReference type="ChEBI" id="CHEBI:33738"/>
        <dbReference type="ChEBI" id="CHEBI:83466"/>
        <dbReference type="ChEBI" id="CHEBI:116509"/>
    </reaction>
    <physiologicalReaction direction="left-to-right" evidence="1">
        <dbReference type="Rhea" id="RHEA:65789"/>
    </physiologicalReaction>
</comment>
<comment type="catalytic activity">
    <reaction evidence="1">
        <text>fluometuron + 2 reduced [2Fe-2S]-[ferredoxin] + O2 + 2 H(+) = 3-[3-(trifluoromethyl)phenyl]-1-methylurea + formaldehyde + 2 oxidized [2Fe-2S]-[ferredoxin] + H2O</text>
        <dbReference type="Rhea" id="RHEA:65792"/>
        <dbReference type="Rhea" id="RHEA-COMP:10000"/>
        <dbReference type="Rhea" id="RHEA-COMP:10001"/>
        <dbReference type="ChEBI" id="CHEBI:15377"/>
        <dbReference type="ChEBI" id="CHEBI:15378"/>
        <dbReference type="ChEBI" id="CHEBI:15379"/>
        <dbReference type="ChEBI" id="CHEBI:16842"/>
        <dbReference type="ChEBI" id="CHEBI:33737"/>
        <dbReference type="ChEBI" id="CHEBI:33738"/>
        <dbReference type="ChEBI" id="CHEBI:82012"/>
        <dbReference type="ChEBI" id="CHEBI:157704"/>
    </reaction>
    <physiologicalReaction direction="left-to-right" evidence="1">
        <dbReference type="Rhea" id="RHEA:65793"/>
    </physiologicalReaction>
</comment>
<comment type="catalytic activity">
    <reaction evidence="1">
        <text>fenuron + 2 reduced [2Fe-2S]-[ferredoxin] + O2 + 2 H(+) = 1-methyl-3-phenylurea + formaldehyde + 2 oxidized [2Fe-2S]-[ferredoxin] + H2O</text>
        <dbReference type="Rhea" id="RHEA:65796"/>
        <dbReference type="Rhea" id="RHEA-COMP:10000"/>
        <dbReference type="Rhea" id="RHEA-COMP:10001"/>
        <dbReference type="ChEBI" id="CHEBI:5013"/>
        <dbReference type="ChEBI" id="CHEBI:15377"/>
        <dbReference type="ChEBI" id="CHEBI:15378"/>
        <dbReference type="ChEBI" id="CHEBI:15379"/>
        <dbReference type="ChEBI" id="CHEBI:16842"/>
        <dbReference type="ChEBI" id="CHEBI:33737"/>
        <dbReference type="ChEBI" id="CHEBI:33738"/>
        <dbReference type="ChEBI" id="CHEBI:157705"/>
    </reaction>
    <physiologicalReaction direction="left-to-right" evidence="1">
        <dbReference type="Rhea" id="RHEA:65797"/>
    </physiologicalReaction>
</comment>
<comment type="activity regulation">
    <text evidence="1">Activity is stimulated in vitro by coexpression of a [3Fe-4S]-type ferredoxin.</text>
</comment>
<comment type="pathway">
    <text evidence="4">Xenobiotic degradation.</text>
</comment>
<comment type="subunit">
    <text evidence="1">PdmA (subunit alpha) and PdmB (subunit beta) form the oxygenase component of a bacterial Rieske non-heme iron oxygenase (RO) system.</text>
</comment>
<comment type="similarity">
    <text evidence="3">Belongs to the bacterial ring-hydroxylating dioxygenase beta subunit family.</text>
</comment>
<gene>
    <name evidence="2" type="primary">pdmB</name>
    <name evidence="5" type="ORF">TZ53_25070</name>
</gene>
<name>PDMB_SPHYB</name>